<evidence type="ECO:0000255" key="1">
    <source>
        <dbReference type="HAMAP-Rule" id="MF_01901"/>
    </source>
</evidence>
<keyword id="KW-0029">Amino-acid transport</keyword>
<keyword id="KW-0997">Cell inner membrane</keyword>
<keyword id="KW-1003">Cell membrane</keyword>
<keyword id="KW-0472">Membrane</keyword>
<keyword id="KW-0812">Transmembrane</keyword>
<keyword id="KW-1133">Transmembrane helix</keyword>
<keyword id="KW-0813">Transport</keyword>
<comment type="function">
    <text evidence="1">Involved in the export of arginine. Important to control the intracellular level of arginine and the correct balance between arginine and lysine.</text>
</comment>
<comment type="catalytic activity">
    <reaction evidence="1">
        <text>L-arginine(in) = L-arginine(out)</text>
        <dbReference type="Rhea" id="RHEA:32143"/>
        <dbReference type="ChEBI" id="CHEBI:32682"/>
    </reaction>
    <physiologicalReaction direction="left-to-right" evidence="1">
        <dbReference type="Rhea" id="RHEA:32144"/>
    </physiologicalReaction>
</comment>
<comment type="subcellular location">
    <subcellularLocation>
        <location evidence="1">Cell inner membrane</location>
        <topology evidence="1">Multi-pass membrane protein</topology>
    </subcellularLocation>
</comment>
<comment type="similarity">
    <text evidence="1">Belongs to the LysE/ArgO transporter (TC 2.A.75) family.</text>
</comment>
<gene>
    <name evidence="1" type="primary">argO</name>
    <name type="ordered locus">Spro_3927</name>
</gene>
<accession>A8GIT2</accession>
<organism>
    <name type="scientific">Serratia proteamaculans (strain 568)</name>
    <dbReference type="NCBI Taxonomy" id="399741"/>
    <lineage>
        <taxon>Bacteria</taxon>
        <taxon>Pseudomonadati</taxon>
        <taxon>Pseudomonadota</taxon>
        <taxon>Gammaproteobacteria</taxon>
        <taxon>Enterobacterales</taxon>
        <taxon>Yersiniaceae</taxon>
        <taxon>Serratia</taxon>
    </lineage>
</organism>
<dbReference type="EMBL" id="CP000826">
    <property type="protein sequence ID" value="ABV43022.1"/>
    <property type="molecule type" value="Genomic_DNA"/>
</dbReference>
<dbReference type="STRING" id="399741.Spro_3927"/>
<dbReference type="KEGG" id="spe:Spro_3927"/>
<dbReference type="eggNOG" id="COG1279">
    <property type="taxonomic scope" value="Bacteria"/>
</dbReference>
<dbReference type="HOGENOM" id="CLU_087840_0_1_6"/>
<dbReference type="OrthoDB" id="5638726at2"/>
<dbReference type="GO" id="GO:0005886">
    <property type="term" value="C:plasma membrane"/>
    <property type="evidence" value="ECO:0007669"/>
    <property type="project" value="UniProtKB-SubCell"/>
</dbReference>
<dbReference type="GO" id="GO:0061459">
    <property type="term" value="F:L-arginine transmembrane transporter activity"/>
    <property type="evidence" value="ECO:0007669"/>
    <property type="project" value="UniProtKB-UniRule"/>
</dbReference>
<dbReference type="HAMAP" id="MF_01901">
    <property type="entry name" value="ArgO"/>
    <property type="match status" value="1"/>
</dbReference>
<dbReference type="InterPro" id="IPR023445">
    <property type="entry name" value="Arg_export_ArgO_enterobac"/>
</dbReference>
<dbReference type="InterPro" id="IPR001123">
    <property type="entry name" value="LeuE-type"/>
</dbReference>
<dbReference type="InterPro" id="IPR004777">
    <property type="entry name" value="Lys/arg_exporter"/>
</dbReference>
<dbReference type="NCBIfam" id="TIGR00948">
    <property type="entry name" value="2a75"/>
    <property type="match status" value="1"/>
</dbReference>
<dbReference type="NCBIfam" id="NF006801">
    <property type="entry name" value="PRK09304.1"/>
    <property type="match status" value="1"/>
</dbReference>
<dbReference type="PANTHER" id="PTHR30086">
    <property type="entry name" value="ARGININE EXPORTER PROTEIN ARGO"/>
    <property type="match status" value="1"/>
</dbReference>
<dbReference type="PANTHER" id="PTHR30086:SF20">
    <property type="entry name" value="ARGININE EXPORTER PROTEIN ARGO-RELATED"/>
    <property type="match status" value="1"/>
</dbReference>
<dbReference type="Pfam" id="PF01810">
    <property type="entry name" value="LysE"/>
    <property type="match status" value="1"/>
</dbReference>
<sequence length="205" mass="22367">MLAVFLQGFALSAAMILPLGPQNVFVMNQGIRRQYHLMVASLCALSDIVLICGGIFGGSALLSRSPLLLALVTWGGVAFLLWYGWGAFRTAFSRQLALATAEELKQSRWRLVVTMLAVTWLNPHVYLDTFVVLGSLGGQLTPDVRSWFALGAVSASVVWFFALALLASWLAPWLKTQMAQRIINTLVGVVMWGIALQLAWQGASL</sequence>
<reference key="1">
    <citation type="submission" date="2007-09" db="EMBL/GenBank/DDBJ databases">
        <title>Complete sequence of chromosome of Serratia proteamaculans 568.</title>
        <authorList>
            <consortium name="US DOE Joint Genome Institute"/>
            <person name="Copeland A."/>
            <person name="Lucas S."/>
            <person name="Lapidus A."/>
            <person name="Barry K."/>
            <person name="Glavina del Rio T."/>
            <person name="Dalin E."/>
            <person name="Tice H."/>
            <person name="Pitluck S."/>
            <person name="Chain P."/>
            <person name="Malfatti S."/>
            <person name="Shin M."/>
            <person name="Vergez L."/>
            <person name="Schmutz J."/>
            <person name="Larimer F."/>
            <person name="Land M."/>
            <person name="Hauser L."/>
            <person name="Kyrpides N."/>
            <person name="Kim E."/>
            <person name="Taghavi S."/>
            <person name="Newman L."/>
            <person name="Vangronsveld J."/>
            <person name="van der Lelie D."/>
            <person name="Richardson P."/>
        </authorList>
    </citation>
    <scope>NUCLEOTIDE SEQUENCE [LARGE SCALE GENOMIC DNA]</scope>
    <source>
        <strain>568</strain>
    </source>
</reference>
<feature type="chain" id="PRO_1000070582" description="Arginine exporter protein ArgO">
    <location>
        <begin position="1"/>
        <end position="205"/>
    </location>
</feature>
<feature type="transmembrane region" description="Helical" evidence="1">
    <location>
        <begin position="1"/>
        <end position="21"/>
    </location>
</feature>
<feature type="transmembrane region" description="Helical" evidence="1">
    <location>
        <begin position="37"/>
        <end position="57"/>
    </location>
</feature>
<feature type="transmembrane region" description="Helical" evidence="1">
    <location>
        <begin position="68"/>
        <end position="88"/>
    </location>
</feature>
<feature type="transmembrane region" description="Helical" evidence="1">
    <location>
        <begin position="112"/>
        <end position="132"/>
    </location>
</feature>
<feature type="transmembrane region" description="Helical" evidence="1">
    <location>
        <begin position="147"/>
        <end position="167"/>
    </location>
</feature>
<feature type="transmembrane region" description="Helical" evidence="1">
    <location>
        <begin position="182"/>
        <end position="202"/>
    </location>
</feature>
<name>ARGO_SERP5</name>
<proteinExistence type="inferred from homology"/>
<protein>
    <recommendedName>
        <fullName evidence="1">Arginine exporter protein ArgO</fullName>
    </recommendedName>
</protein>